<sequence length="377" mass="43055">MRTQIYISVTVLILLLKKSDLEAVRVPSPESVSVQCDSYGVEARWEYPEVHQDVYFQVKVKDEFTERDSSRTKNLHLNISSMLFRPAYNRYCVTVTAVRGGEKSDPSDFFIFSFNENAAAYIKCSLDFPEVELSPKDGRLHVQFTNPLHLYRNSPALRDLSEDLKYCIETDQGKNKVCETCQMKQNASCETSVVFSEHRGEYCFSLTGNIGQRIFNPRSSCFTGDIRRYTPFTVYLYPVLGVTLTLLFITGIIILLEKKCNSEMKKKVPSMFPHFFDFGETQSHLPKTLCVVADKVEPHLQIELVEDPEEQTSLVPLSDNKDLEGVYSEDKNSYGPNDLVEDEQSDLSDFYDCPHAPKQKREMSPGDTVDSYGPRLL</sequence>
<protein>
    <recommendedName>
        <fullName evidence="7">Interferon gamma receptor 1</fullName>
    </recommendedName>
    <alternativeName>
        <fullName evidence="6">Interferon gamma receptor 1-1</fullName>
    </alternativeName>
</protein>
<evidence type="ECO:0000255" key="1"/>
<evidence type="ECO:0000255" key="2">
    <source>
        <dbReference type="PROSITE-ProRule" id="PRU00316"/>
    </source>
</evidence>
<evidence type="ECO:0000255" key="3">
    <source>
        <dbReference type="PROSITE-ProRule" id="PRU00498"/>
    </source>
</evidence>
<evidence type="ECO:0000256" key="4">
    <source>
        <dbReference type="SAM" id="MobiDB-lite"/>
    </source>
</evidence>
<evidence type="ECO:0000269" key="5">
    <source>
    </source>
</evidence>
<evidence type="ECO:0000303" key="6">
    <source>
    </source>
</evidence>
<evidence type="ECO:0000305" key="7"/>
<evidence type="ECO:0000305" key="8">
    <source>
    </source>
</evidence>
<evidence type="ECO:0000312" key="9">
    <source>
        <dbReference type="EMBL" id="ACV41808.1"/>
    </source>
</evidence>
<gene>
    <name evidence="7" type="primary">ifngr1</name>
    <name evidence="6" type="synonym">ifngr1-1</name>
</gene>
<proteinExistence type="evidence at transcript level"/>
<accession>C8AW46</accession>
<dbReference type="EMBL" id="GQ149697">
    <property type="protein sequence ID" value="ACV41808.1"/>
    <property type="molecule type" value="mRNA"/>
</dbReference>
<dbReference type="SMR" id="C8AW46"/>
<dbReference type="GlyCosmos" id="C8AW46">
    <property type="glycosylation" value="2 sites, No reported glycans"/>
</dbReference>
<dbReference type="Proteomes" id="UP000515129">
    <property type="component" value="Unplaced"/>
</dbReference>
<dbReference type="GO" id="GO:0005886">
    <property type="term" value="C:plasma membrane"/>
    <property type="evidence" value="ECO:0007669"/>
    <property type="project" value="UniProtKB-SubCell"/>
</dbReference>
<dbReference type="GO" id="GO:0004896">
    <property type="term" value="F:cytokine receptor activity"/>
    <property type="evidence" value="ECO:0007669"/>
    <property type="project" value="TreeGrafter"/>
</dbReference>
<dbReference type="Gene3D" id="2.60.40.10">
    <property type="entry name" value="Immunoglobulins"/>
    <property type="match status" value="2"/>
</dbReference>
<dbReference type="InterPro" id="IPR003961">
    <property type="entry name" value="FN3_dom"/>
</dbReference>
<dbReference type="InterPro" id="IPR036116">
    <property type="entry name" value="FN3_sf"/>
</dbReference>
<dbReference type="InterPro" id="IPR013783">
    <property type="entry name" value="Ig-like_fold"/>
</dbReference>
<dbReference type="InterPro" id="IPR050650">
    <property type="entry name" value="Type-II_Cytokine-TF_Rcpt"/>
</dbReference>
<dbReference type="PANTHER" id="PTHR20859:SF87">
    <property type="entry name" value="CYTOKINE RECEPTOR FAMILY MEMBER B13-RELATED"/>
    <property type="match status" value="1"/>
</dbReference>
<dbReference type="PANTHER" id="PTHR20859">
    <property type="entry name" value="INTERFERON/INTERLEUKIN RECEPTOR"/>
    <property type="match status" value="1"/>
</dbReference>
<dbReference type="Pfam" id="PF01108">
    <property type="entry name" value="Tissue_fac"/>
    <property type="match status" value="1"/>
</dbReference>
<dbReference type="SUPFAM" id="SSF49265">
    <property type="entry name" value="Fibronectin type III"/>
    <property type="match status" value="1"/>
</dbReference>
<comment type="function">
    <text evidence="5">Receptor which shows binding specificity for the cytokine ifng1r (interferon gamma-related).</text>
</comment>
<comment type="subcellular location">
    <subcellularLocation>
        <location evidence="8">Cell membrane</location>
        <topology evidence="1">Single-pass type I membrane protein</topology>
    </subcellularLocation>
</comment>
<comment type="tissue specificity">
    <text evidence="5">Highly expressed in spleen. Also detected in brain, kidney, gill, intestine and heart. Expressed at very low levels in muscle. In immune cell populations, shows highest expression in monocytes, and slightly lower expression in peripheral blood leukocytes, splenocytes, neutrophils and mature macrophages.</text>
</comment>
<comment type="induction">
    <text evidence="5">Up-regulated in response to ifng1 (interferon gamma 1), tgfb1b (TGF-beta), and tnfb (TNF-alpha 2).</text>
</comment>
<comment type="similarity">
    <text evidence="7">Belongs to the type II cytokine receptor family.</text>
</comment>
<name>INGR1_CARAU</name>
<feature type="signal peptide" evidence="1">
    <location>
        <begin position="1"/>
        <end position="23"/>
    </location>
</feature>
<feature type="chain" id="PRO_5002989551" description="Interferon gamma receptor 1">
    <location>
        <begin position="24"/>
        <end position="377"/>
    </location>
</feature>
<feature type="topological domain" description="Extracellular" evidence="7">
    <location>
        <begin position="24"/>
        <end position="235"/>
    </location>
</feature>
<feature type="transmembrane region" description="Helical" evidence="1">
    <location>
        <begin position="236"/>
        <end position="256"/>
    </location>
</feature>
<feature type="topological domain" description="Cytoplasmic" evidence="7">
    <location>
        <begin position="257"/>
        <end position="377"/>
    </location>
</feature>
<feature type="domain" description="Fibronectin type-III" evidence="2">
    <location>
        <begin position="26"/>
        <end position="117"/>
    </location>
</feature>
<feature type="region of interest" description="Disordered" evidence="4">
    <location>
        <begin position="326"/>
        <end position="377"/>
    </location>
</feature>
<feature type="glycosylation site" description="N-linked (GlcNAc...) asparagine" evidence="3">
    <location>
        <position position="78"/>
    </location>
</feature>
<feature type="glycosylation site" description="N-linked (GlcNAc...) asparagine" evidence="3">
    <location>
        <position position="186"/>
    </location>
</feature>
<organism evidence="9">
    <name type="scientific">Carassius auratus</name>
    <name type="common">Goldfish</name>
    <dbReference type="NCBI Taxonomy" id="7957"/>
    <lineage>
        <taxon>Eukaryota</taxon>
        <taxon>Metazoa</taxon>
        <taxon>Chordata</taxon>
        <taxon>Craniata</taxon>
        <taxon>Vertebrata</taxon>
        <taxon>Euteleostomi</taxon>
        <taxon>Actinopterygii</taxon>
        <taxon>Neopterygii</taxon>
        <taxon>Teleostei</taxon>
        <taxon>Ostariophysi</taxon>
        <taxon>Cypriniformes</taxon>
        <taxon>Cyprinidae</taxon>
        <taxon>Cyprininae</taxon>
        <taxon>Carassius</taxon>
    </lineage>
</organism>
<keyword id="KW-1003">Cell membrane</keyword>
<keyword id="KW-0325">Glycoprotein</keyword>
<keyword id="KW-0472">Membrane</keyword>
<keyword id="KW-0675">Receptor</keyword>
<keyword id="KW-1185">Reference proteome</keyword>
<keyword id="KW-0732">Signal</keyword>
<keyword id="KW-0812">Transmembrane</keyword>
<keyword id="KW-1133">Transmembrane helix</keyword>
<reference key="1">
    <citation type="journal article" date="2009" name="Mol. Immunol.">
        <title>Molecular characterization of novel interferon gamma receptor 1 isoforms in zebrafish (Danio rerio) and goldfish (Carassius auratus L.).</title>
        <authorList>
            <person name="Grayfer L."/>
            <person name="Belosevic M."/>
        </authorList>
    </citation>
    <scope>NUCLEOTIDE SEQUENCE [MRNA]</scope>
    <scope>FUNCTION</scope>
    <scope>SUBCELLULAR LOCATION</scope>
    <scope>TISSUE SPECIFICITY</scope>
    <scope>INDUCTION</scope>
</reference>